<evidence type="ECO:0000255" key="1">
    <source>
        <dbReference type="HAMAP-Rule" id="MF_00228"/>
    </source>
</evidence>
<organism>
    <name type="scientific">Methanosphaera stadtmanae (strain ATCC 43021 / DSM 3091 / JCM 11832 / MCB-3)</name>
    <dbReference type="NCBI Taxonomy" id="339860"/>
    <lineage>
        <taxon>Archaea</taxon>
        <taxon>Methanobacteriati</taxon>
        <taxon>Methanobacteriota</taxon>
        <taxon>Methanomada group</taxon>
        <taxon>Methanobacteria</taxon>
        <taxon>Methanobacteriales</taxon>
        <taxon>Methanobacteriaceae</taxon>
        <taxon>Methanosphaera</taxon>
    </lineage>
</organism>
<reference key="1">
    <citation type="journal article" date="2006" name="J. Bacteriol.">
        <title>The genome sequence of Methanosphaera stadtmanae reveals why this human intestinal archaeon is restricted to methanol and H2 for methane formation and ATP synthesis.</title>
        <authorList>
            <person name="Fricke W.F."/>
            <person name="Seedorf H."/>
            <person name="Henne A."/>
            <person name="Kruer M."/>
            <person name="Liesegang H."/>
            <person name="Hedderich R."/>
            <person name="Gottschalk G."/>
            <person name="Thauer R.K."/>
        </authorList>
    </citation>
    <scope>NUCLEOTIDE SEQUENCE [LARGE SCALE GENOMIC DNA]</scope>
    <source>
        <strain>ATCC 43021 / DSM 3091 / JCM 11832 / MCB-3</strain>
    </source>
</reference>
<gene>
    <name evidence="1" type="primary">thiM2</name>
    <name type="ordered locus">Msp_0694</name>
</gene>
<sequence>MLEQCSKNIEKLRNKCPLTHCITNYVTINDCANVVLAIGGSPAMANEAPEIEEFVEAAGVTIINMGTLLEDQIEPMQIAACHTKKTNTPLVLDPVAVGVSKLRNDITIDLINKSSVDVIRGNMSEIKAIANLFNITDEKSVAKGVDVSSDDIITKDNIKSNASLVKAVADKLNTTIAVSGAIDIISDGVSIYLIDNGEEVMSKITGSGCMLTCVIGSFCAITSPLEAAIIGSLSMAISGELARRKMEINNEGSGSFRTYLIDMMYNMNDETIMKYGKLYKLE</sequence>
<protein>
    <recommendedName>
        <fullName evidence="1">Hydroxyethylthiazole kinase 2</fullName>
        <ecNumber evidence="1">2.7.1.50</ecNumber>
    </recommendedName>
    <alternativeName>
        <fullName evidence="1">4-methyl-5-beta-hydroxyethylthiazole kinase 2</fullName>
        <shortName evidence="1">TH kinase 2</shortName>
        <shortName evidence="1">Thz kinase 2</shortName>
    </alternativeName>
</protein>
<comment type="function">
    <text evidence="1">Catalyzes the phosphorylation of the hydroxyl group of 4-methyl-5-beta-hydroxyethylthiazole (THZ).</text>
</comment>
<comment type="catalytic activity">
    <reaction evidence="1">
        <text>5-(2-hydroxyethyl)-4-methylthiazole + ATP = 4-methyl-5-(2-phosphooxyethyl)-thiazole + ADP + H(+)</text>
        <dbReference type="Rhea" id="RHEA:24212"/>
        <dbReference type="ChEBI" id="CHEBI:15378"/>
        <dbReference type="ChEBI" id="CHEBI:17957"/>
        <dbReference type="ChEBI" id="CHEBI:30616"/>
        <dbReference type="ChEBI" id="CHEBI:58296"/>
        <dbReference type="ChEBI" id="CHEBI:456216"/>
        <dbReference type="EC" id="2.7.1.50"/>
    </reaction>
</comment>
<comment type="cofactor">
    <cofactor evidence="1">
        <name>Mg(2+)</name>
        <dbReference type="ChEBI" id="CHEBI:18420"/>
    </cofactor>
</comment>
<comment type="pathway">
    <text evidence="1">Cofactor biosynthesis; thiamine diphosphate biosynthesis; 4-methyl-5-(2-phosphoethyl)-thiazole from 5-(2-hydroxyethyl)-4-methylthiazole: step 1/1.</text>
</comment>
<comment type="similarity">
    <text evidence="1">Belongs to the Thz kinase family.</text>
</comment>
<keyword id="KW-0067">ATP-binding</keyword>
<keyword id="KW-0418">Kinase</keyword>
<keyword id="KW-0460">Magnesium</keyword>
<keyword id="KW-0479">Metal-binding</keyword>
<keyword id="KW-0547">Nucleotide-binding</keyword>
<keyword id="KW-1185">Reference proteome</keyword>
<keyword id="KW-0784">Thiamine biosynthesis</keyword>
<keyword id="KW-0808">Transferase</keyword>
<accession>Q2NGG1</accession>
<dbReference type="EC" id="2.7.1.50" evidence="1"/>
<dbReference type="EMBL" id="CP000102">
    <property type="protein sequence ID" value="ABC57092.1"/>
    <property type="molecule type" value="Genomic_DNA"/>
</dbReference>
<dbReference type="SMR" id="Q2NGG1"/>
<dbReference type="STRING" id="339860.Msp_0694"/>
<dbReference type="KEGG" id="mst:Msp_0694"/>
<dbReference type="eggNOG" id="arCOG00019">
    <property type="taxonomic scope" value="Archaea"/>
</dbReference>
<dbReference type="HOGENOM" id="CLU_019943_0_0_2"/>
<dbReference type="OrthoDB" id="214286at2157"/>
<dbReference type="UniPathway" id="UPA00060">
    <property type="reaction ID" value="UER00139"/>
</dbReference>
<dbReference type="Proteomes" id="UP000001931">
    <property type="component" value="Chromosome"/>
</dbReference>
<dbReference type="GO" id="GO:0005524">
    <property type="term" value="F:ATP binding"/>
    <property type="evidence" value="ECO:0007669"/>
    <property type="project" value="UniProtKB-UniRule"/>
</dbReference>
<dbReference type="GO" id="GO:0004417">
    <property type="term" value="F:hydroxyethylthiazole kinase activity"/>
    <property type="evidence" value="ECO:0007669"/>
    <property type="project" value="UniProtKB-UniRule"/>
</dbReference>
<dbReference type="GO" id="GO:0000287">
    <property type="term" value="F:magnesium ion binding"/>
    <property type="evidence" value="ECO:0007669"/>
    <property type="project" value="UniProtKB-UniRule"/>
</dbReference>
<dbReference type="GO" id="GO:0009228">
    <property type="term" value="P:thiamine biosynthetic process"/>
    <property type="evidence" value="ECO:0007669"/>
    <property type="project" value="UniProtKB-KW"/>
</dbReference>
<dbReference type="GO" id="GO:0009229">
    <property type="term" value="P:thiamine diphosphate biosynthetic process"/>
    <property type="evidence" value="ECO:0007669"/>
    <property type="project" value="UniProtKB-UniRule"/>
</dbReference>
<dbReference type="CDD" id="cd01170">
    <property type="entry name" value="THZ_kinase"/>
    <property type="match status" value="1"/>
</dbReference>
<dbReference type="Gene3D" id="3.40.1190.20">
    <property type="match status" value="1"/>
</dbReference>
<dbReference type="HAMAP" id="MF_00228">
    <property type="entry name" value="Thz_kinase"/>
    <property type="match status" value="1"/>
</dbReference>
<dbReference type="InterPro" id="IPR000417">
    <property type="entry name" value="Hyethyz_kinase"/>
</dbReference>
<dbReference type="InterPro" id="IPR029056">
    <property type="entry name" value="Ribokinase-like"/>
</dbReference>
<dbReference type="NCBIfam" id="NF006830">
    <property type="entry name" value="PRK09355.1"/>
    <property type="match status" value="1"/>
</dbReference>
<dbReference type="Pfam" id="PF02110">
    <property type="entry name" value="HK"/>
    <property type="match status" value="1"/>
</dbReference>
<dbReference type="PIRSF" id="PIRSF000513">
    <property type="entry name" value="Thz_kinase"/>
    <property type="match status" value="1"/>
</dbReference>
<dbReference type="PRINTS" id="PR01099">
    <property type="entry name" value="HYETHTZKNASE"/>
</dbReference>
<dbReference type="SUPFAM" id="SSF53613">
    <property type="entry name" value="Ribokinase-like"/>
    <property type="match status" value="1"/>
</dbReference>
<proteinExistence type="inferred from homology"/>
<feature type="chain" id="PRO_0000383919" description="Hydroxyethylthiazole kinase 2">
    <location>
        <begin position="1"/>
        <end position="282"/>
    </location>
</feature>
<feature type="binding site" evidence="1">
    <location>
        <position position="44"/>
    </location>
    <ligand>
        <name>substrate</name>
    </ligand>
</feature>
<feature type="binding site" evidence="1">
    <location>
        <position position="120"/>
    </location>
    <ligand>
        <name>ATP</name>
        <dbReference type="ChEBI" id="CHEBI:30616"/>
    </ligand>
</feature>
<feature type="binding site" evidence="1">
    <location>
        <position position="179"/>
    </location>
    <ligand>
        <name>ATP</name>
        <dbReference type="ChEBI" id="CHEBI:30616"/>
    </ligand>
</feature>
<feature type="binding site" evidence="1">
    <location>
        <position position="206"/>
    </location>
    <ligand>
        <name>substrate</name>
    </ligand>
</feature>
<name>THIM2_METST</name>